<feature type="initiator methionine" description="Removed" evidence="1">
    <location>
        <position position="1"/>
    </location>
</feature>
<feature type="chain" id="PRO_0000418490" description="Sulfoacetaldehyde reductase">
    <location>
        <begin position="2"/>
        <end position="253"/>
    </location>
</feature>
<feature type="active site" description="Proton acceptor" evidence="2">
    <location>
        <position position="152"/>
    </location>
</feature>
<feature type="binding site" evidence="1">
    <location>
        <begin position="6"/>
        <end position="30"/>
    </location>
    <ligand>
        <name>NADP(+)</name>
        <dbReference type="ChEBI" id="CHEBI:58349"/>
    </ligand>
</feature>
<feature type="binding site" evidence="1">
    <location>
        <position position="139"/>
    </location>
    <ligand>
        <name>substrate</name>
    </ligand>
</feature>
<accession>Q1R183</accession>
<gene>
    <name type="primary">isfD</name>
    <name type="ordered locus">Csal_0161</name>
</gene>
<dbReference type="EC" id="1.1.1.313"/>
<dbReference type="EMBL" id="CP000285">
    <property type="protein sequence ID" value="ABE57525.1"/>
    <property type="molecule type" value="Genomic_DNA"/>
</dbReference>
<dbReference type="RefSeq" id="WP_011505471.1">
    <property type="nucleotide sequence ID" value="NC_007963.1"/>
</dbReference>
<dbReference type="SMR" id="Q1R183"/>
<dbReference type="STRING" id="290398.Csal_0161"/>
<dbReference type="GeneID" id="95332911"/>
<dbReference type="KEGG" id="csa:Csal_0161"/>
<dbReference type="eggNOG" id="COG4221">
    <property type="taxonomic scope" value="Bacteria"/>
</dbReference>
<dbReference type="HOGENOM" id="CLU_010194_2_10_6"/>
<dbReference type="OrthoDB" id="9810734at2"/>
<dbReference type="BioCyc" id="MetaCyc:MONOMER-16213"/>
<dbReference type="Proteomes" id="UP000000239">
    <property type="component" value="Chromosome"/>
</dbReference>
<dbReference type="GO" id="GO:0016491">
    <property type="term" value="F:oxidoreductase activity"/>
    <property type="evidence" value="ECO:0007669"/>
    <property type="project" value="UniProtKB-KW"/>
</dbReference>
<dbReference type="FunFam" id="3.40.50.720:FF:000047">
    <property type="entry name" value="NADP-dependent L-serine/L-allo-threonine dehydrogenase"/>
    <property type="match status" value="1"/>
</dbReference>
<dbReference type="Gene3D" id="3.40.50.720">
    <property type="entry name" value="NAD(P)-binding Rossmann-like Domain"/>
    <property type="match status" value="1"/>
</dbReference>
<dbReference type="InterPro" id="IPR036291">
    <property type="entry name" value="NAD(P)-bd_dom_sf"/>
</dbReference>
<dbReference type="InterPro" id="IPR020904">
    <property type="entry name" value="Sc_DH/Rdtase_CS"/>
</dbReference>
<dbReference type="InterPro" id="IPR002347">
    <property type="entry name" value="SDR_fam"/>
</dbReference>
<dbReference type="PANTHER" id="PTHR42901">
    <property type="entry name" value="ALCOHOL DEHYDROGENASE"/>
    <property type="match status" value="1"/>
</dbReference>
<dbReference type="PANTHER" id="PTHR42901:SF1">
    <property type="entry name" value="ALCOHOL DEHYDROGENASE"/>
    <property type="match status" value="1"/>
</dbReference>
<dbReference type="Pfam" id="PF00106">
    <property type="entry name" value="adh_short"/>
    <property type="match status" value="1"/>
</dbReference>
<dbReference type="PRINTS" id="PR00081">
    <property type="entry name" value="GDHRDH"/>
</dbReference>
<dbReference type="PRINTS" id="PR00080">
    <property type="entry name" value="SDRFAMILY"/>
</dbReference>
<dbReference type="SMART" id="SM00822">
    <property type="entry name" value="PKS_KR"/>
    <property type="match status" value="1"/>
</dbReference>
<dbReference type="SUPFAM" id="SSF51735">
    <property type="entry name" value="NAD(P)-binding Rossmann-fold domains"/>
    <property type="match status" value="1"/>
</dbReference>
<dbReference type="PROSITE" id="PS00061">
    <property type="entry name" value="ADH_SHORT"/>
    <property type="match status" value="1"/>
</dbReference>
<reference key="1">
    <citation type="journal article" date="2011" name="Stand. Genomic Sci.">
        <title>Complete genome sequence of the halophilic and highly halotolerant Chromohalobacter salexigens type strain (1H11(T)).</title>
        <authorList>
            <person name="Copeland A."/>
            <person name="O'Connor K."/>
            <person name="Lucas S."/>
            <person name="Lapidus A."/>
            <person name="Berry K.W."/>
            <person name="Detter J.C."/>
            <person name="Del Rio T.G."/>
            <person name="Hammon N."/>
            <person name="Dalin E."/>
            <person name="Tice H."/>
            <person name="Pitluck S."/>
            <person name="Bruce D."/>
            <person name="Goodwin L."/>
            <person name="Han C."/>
            <person name="Tapia R."/>
            <person name="Saunders E."/>
            <person name="Schmutz J."/>
            <person name="Brettin T."/>
            <person name="Larimer F."/>
            <person name="Land M."/>
            <person name="Hauser L."/>
            <person name="Vargas C."/>
            <person name="Nieto J.J."/>
            <person name="Kyrpides N.C."/>
            <person name="Ivanova N."/>
            <person name="Goker M."/>
            <person name="Klenk H.P."/>
            <person name="Csonka L.N."/>
            <person name="Woyke T."/>
        </authorList>
    </citation>
    <scope>NUCLEOTIDE SEQUENCE [LARGE SCALE GENOMIC DNA]</scope>
    <source>
        <strain>ATCC BAA-138 / DSM 3043 / CIP 106854 / NCIMB 13768 / 1H11</strain>
    </source>
</reference>
<reference key="2">
    <citation type="journal article" date="2010" name="Microbiology">
        <title>Isethionate formation from taurine in Chromohalobacter salexigens: purification of sulfoacetaldehyde reductase.</title>
        <authorList>
            <person name="Krejcik Z."/>
            <person name="Hollemeyer K."/>
            <person name="Smits T.H."/>
            <person name="Cook A.M."/>
        </authorList>
    </citation>
    <scope>FUNCTION</scope>
    <scope>CATALYTIC ACTIVITY</scope>
    <scope>SUBUNIT</scope>
    <scope>BIOPHYSICOCHEMICAL PROPERTIES</scope>
    <scope>INDUCTION</scope>
    <source>
        <strain>ATCC BAA-138 / DSM 3043 / CIP 106854 / NCIMB 13768 / 1H11</strain>
    </source>
</reference>
<sequence length="253" mass="27183">MTDCVFITGATSGFGRAAAHRFAAAGWSLVLTGRRLERLEALKEELQGRVPVHIIALDVRDSDVVDAAVAALPEGFTRVRTLLNNAGLALAPQSAQHTDRSDWHTMIDTNVTGLVNVTHALLPTLIDVGEGATIVNVGSIAGQWPYPGSHVYGASKAFVKQFSYNLRCDLLGTGVRVTDLAPGIAETEFTLVRTGGDQAASDALYRGTTALTAEDIAEQMFYIATLPPHVNFNRLEVMPTRQAWSAFAIDYDA</sequence>
<protein>
    <recommendedName>
        <fullName>Sulfoacetaldehyde reductase</fullName>
        <ecNumber>1.1.1.313</ecNumber>
    </recommendedName>
    <alternativeName>
        <fullName>Isethionate formation reductase</fullName>
    </alternativeName>
</protein>
<comment type="function">
    <text evidence="3">Catalyzes the formation of isethionate from 2-sulfoacetaldehyde in the deaminative pathway of taurine. The enzyme is specific for NADPH; NADH is not a substrate. Responsible for most of the activity observed in taurine-grown cells.</text>
</comment>
<comment type="catalytic activity">
    <reaction evidence="3">
        <text>2-hydroxyethane-1-sulfonate + NADP(+) = sulfoacetaldehyde + NADPH + H(+)</text>
        <dbReference type="Rhea" id="RHEA:29591"/>
        <dbReference type="ChEBI" id="CHEBI:15378"/>
        <dbReference type="ChEBI" id="CHEBI:57783"/>
        <dbReference type="ChEBI" id="CHEBI:58246"/>
        <dbReference type="ChEBI" id="CHEBI:58349"/>
        <dbReference type="ChEBI" id="CHEBI:61904"/>
        <dbReference type="EC" id="1.1.1.313"/>
    </reaction>
</comment>
<comment type="biophysicochemical properties">
    <kinetics>
        <KM evidence="3">0.13 mM for 2-sulfoacetaldehyde</KM>
        <KM evidence="3">0.061 mM for NADPH</KM>
    </kinetics>
    <phDependence>
        <text evidence="3">Optimum pH is 6.5-9.5.</text>
    </phDependence>
</comment>
<comment type="pathway">
    <text>Organosulfur degradation.</text>
</comment>
<comment type="subunit">
    <text evidence="3">Homodimer and heterotetramer.</text>
</comment>
<comment type="induction">
    <text evidence="3">By taurine.</text>
</comment>
<comment type="similarity">
    <text evidence="4">Belongs to the short-chain dehydrogenases/reductases (SDR) family.</text>
</comment>
<organism>
    <name type="scientific">Chromohalobacter salexigens (strain ATCC BAA-138 / DSM 3043 / CIP 106854 / NCIMB 13768 / 1H11)</name>
    <dbReference type="NCBI Taxonomy" id="290398"/>
    <lineage>
        <taxon>Bacteria</taxon>
        <taxon>Pseudomonadati</taxon>
        <taxon>Pseudomonadota</taxon>
        <taxon>Gammaproteobacteria</taxon>
        <taxon>Oceanospirillales</taxon>
        <taxon>Halomonadaceae</taxon>
        <taxon>Chromohalobacter</taxon>
    </lineage>
</organism>
<keyword id="KW-0521">NADP</keyword>
<keyword id="KW-0560">Oxidoreductase</keyword>
<keyword id="KW-1185">Reference proteome</keyword>
<evidence type="ECO:0000250" key="1"/>
<evidence type="ECO:0000255" key="2">
    <source>
        <dbReference type="PROSITE-ProRule" id="PRU10001"/>
    </source>
</evidence>
<evidence type="ECO:0000269" key="3">
    <source>
    </source>
</evidence>
<evidence type="ECO:0000305" key="4"/>
<name>ISFD_CHRSD</name>
<proteinExistence type="evidence at protein level"/>